<gene>
    <name type="primary">DFM1</name>
    <name type="ordered locus">YDR411C</name>
    <name type="ORF">D9461.2</name>
</gene>
<keyword id="KW-0256">Endoplasmic reticulum</keyword>
<keyword id="KW-0472">Membrane</keyword>
<keyword id="KW-1185">Reference proteome</keyword>
<keyword id="KW-0346">Stress response</keyword>
<keyword id="KW-0812">Transmembrane</keyword>
<keyword id="KW-1133">Transmembrane helix</keyword>
<feature type="chain" id="PRO_0000219054" description="DER1-like family member protein 1">
    <location>
        <begin position="1"/>
        <end position="341"/>
    </location>
</feature>
<feature type="topological domain" description="Cytoplasmic" evidence="1">
    <location>
        <begin position="1"/>
        <end position="41"/>
    </location>
</feature>
<feature type="transmembrane region" description="Helical; Name=1" evidence="1">
    <location>
        <begin position="42"/>
        <end position="62"/>
    </location>
</feature>
<feature type="topological domain" description="Lumenal" evidence="1">
    <location>
        <begin position="63"/>
        <end position="122"/>
    </location>
</feature>
<feature type="transmembrane region" description="Helical; Name=2" evidence="1">
    <location>
        <begin position="123"/>
        <end position="143"/>
    </location>
</feature>
<feature type="topological domain" description="Cytoplasmic" evidence="1">
    <location>
        <begin position="144"/>
        <end position="170"/>
    </location>
</feature>
<feature type="transmembrane region" description="Helical; Name=3" evidence="1">
    <location>
        <begin position="171"/>
        <end position="191"/>
    </location>
</feature>
<feature type="topological domain" description="Lumenal" evidence="1">
    <location>
        <position position="192"/>
    </location>
</feature>
<feature type="transmembrane region" description="Helical; Name=4" evidence="1">
    <location>
        <begin position="193"/>
        <end position="213"/>
    </location>
</feature>
<feature type="topological domain" description="Cytoplasmic" evidence="1">
    <location>
        <begin position="214"/>
        <end position="341"/>
    </location>
</feature>
<feature type="region of interest" description="Disordered" evidence="2">
    <location>
        <begin position="276"/>
        <end position="341"/>
    </location>
</feature>
<feature type="compositionally biased region" description="Polar residues" evidence="2">
    <location>
        <begin position="276"/>
        <end position="286"/>
    </location>
</feature>
<feature type="compositionally biased region" description="Polar residues" evidence="2">
    <location>
        <begin position="296"/>
        <end position="341"/>
    </location>
</feature>
<reference key="1">
    <citation type="journal article" date="1997" name="Nature">
        <title>The nucleotide sequence of Saccharomyces cerevisiae chromosome IV.</title>
        <authorList>
            <person name="Jacq C."/>
            <person name="Alt-Moerbe J."/>
            <person name="Andre B."/>
            <person name="Arnold W."/>
            <person name="Bahr A."/>
            <person name="Ballesta J.P.G."/>
            <person name="Bargues M."/>
            <person name="Baron L."/>
            <person name="Becker A."/>
            <person name="Biteau N."/>
            <person name="Bloecker H."/>
            <person name="Blugeon C."/>
            <person name="Boskovic J."/>
            <person name="Brandt P."/>
            <person name="Brueckner M."/>
            <person name="Buitrago M.J."/>
            <person name="Coster F."/>
            <person name="Delaveau T."/>
            <person name="del Rey F."/>
            <person name="Dujon B."/>
            <person name="Eide L.G."/>
            <person name="Garcia-Cantalejo J.M."/>
            <person name="Goffeau A."/>
            <person name="Gomez-Peris A."/>
            <person name="Granotier C."/>
            <person name="Hanemann V."/>
            <person name="Hankeln T."/>
            <person name="Hoheisel J.D."/>
            <person name="Jaeger W."/>
            <person name="Jimenez A."/>
            <person name="Jonniaux J.-L."/>
            <person name="Kraemer C."/>
            <person name="Kuester H."/>
            <person name="Laamanen P."/>
            <person name="Legros Y."/>
            <person name="Louis E.J."/>
            <person name="Moeller-Rieker S."/>
            <person name="Monnet A."/>
            <person name="Moro M."/>
            <person name="Mueller-Auer S."/>
            <person name="Nussbaumer B."/>
            <person name="Paricio N."/>
            <person name="Paulin L."/>
            <person name="Perea J."/>
            <person name="Perez-Alonso M."/>
            <person name="Perez-Ortin J.E."/>
            <person name="Pohl T.M."/>
            <person name="Prydz H."/>
            <person name="Purnelle B."/>
            <person name="Rasmussen S.W."/>
            <person name="Remacha M.A."/>
            <person name="Revuelta J.L."/>
            <person name="Rieger M."/>
            <person name="Salom D."/>
            <person name="Saluz H.P."/>
            <person name="Saiz J.E."/>
            <person name="Saren A.-M."/>
            <person name="Schaefer M."/>
            <person name="Scharfe M."/>
            <person name="Schmidt E.R."/>
            <person name="Schneider C."/>
            <person name="Scholler P."/>
            <person name="Schwarz S."/>
            <person name="Soler-Mira A."/>
            <person name="Urrestarazu L.A."/>
            <person name="Verhasselt P."/>
            <person name="Vissers S."/>
            <person name="Voet M."/>
            <person name="Volckaert G."/>
            <person name="Wagner G."/>
            <person name="Wambutt R."/>
            <person name="Wedler E."/>
            <person name="Wedler H."/>
            <person name="Woelfl S."/>
            <person name="Harris D.E."/>
            <person name="Bowman S."/>
            <person name="Brown D."/>
            <person name="Churcher C.M."/>
            <person name="Connor R."/>
            <person name="Dedman K."/>
            <person name="Gentles S."/>
            <person name="Hamlin N."/>
            <person name="Hunt S."/>
            <person name="Jones L."/>
            <person name="McDonald S."/>
            <person name="Murphy L.D."/>
            <person name="Niblett D."/>
            <person name="Odell C."/>
            <person name="Oliver K."/>
            <person name="Rajandream M.A."/>
            <person name="Richards C."/>
            <person name="Shore L."/>
            <person name="Walsh S.V."/>
            <person name="Barrell B.G."/>
            <person name="Dietrich F.S."/>
            <person name="Mulligan J.T."/>
            <person name="Allen E."/>
            <person name="Araujo R."/>
            <person name="Aviles E."/>
            <person name="Berno A."/>
            <person name="Carpenter J."/>
            <person name="Chen E."/>
            <person name="Cherry J.M."/>
            <person name="Chung E."/>
            <person name="Duncan M."/>
            <person name="Hunicke-Smith S."/>
            <person name="Hyman R.W."/>
            <person name="Komp C."/>
            <person name="Lashkari D."/>
            <person name="Lew H."/>
            <person name="Lin D."/>
            <person name="Mosedale D."/>
            <person name="Nakahara K."/>
            <person name="Namath A."/>
            <person name="Oefner P."/>
            <person name="Oh C."/>
            <person name="Petel F.X."/>
            <person name="Roberts D."/>
            <person name="Schramm S."/>
            <person name="Schroeder M."/>
            <person name="Shogren T."/>
            <person name="Shroff N."/>
            <person name="Winant A."/>
            <person name="Yelton M.A."/>
            <person name="Botstein D."/>
            <person name="Davis R.W."/>
            <person name="Johnston M."/>
            <person name="Andrews S."/>
            <person name="Brinkman R."/>
            <person name="Cooper J."/>
            <person name="Ding H."/>
            <person name="Du Z."/>
            <person name="Favello A."/>
            <person name="Fulton L."/>
            <person name="Gattung S."/>
            <person name="Greco T."/>
            <person name="Hallsworth K."/>
            <person name="Hawkins J."/>
            <person name="Hillier L.W."/>
            <person name="Jier M."/>
            <person name="Johnson D."/>
            <person name="Johnston L."/>
            <person name="Kirsten J."/>
            <person name="Kucaba T."/>
            <person name="Langston Y."/>
            <person name="Latreille P."/>
            <person name="Le T."/>
            <person name="Mardis E."/>
            <person name="Menezes S."/>
            <person name="Miller N."/>
            <person name="Nhan M."/>
            <person name="Pauley A."/>
            <person name="Peluso D."/>
            <person name="Rifkin L."/>
            <person name="Riles L."/>
            <person name="Taich A."/>
            <person name="Trevaskis E."/>
            <person name="Vignati D."/>
            <person name="Wilcox L."/>
            <person name="Wohldman P."/>
            <person name="Vaudin M."/>
            <person name="Wilson R."/>
            <person name="Waterston R."/>
            <person name="Albermann K."/>
            <person name="Hani J."/>
            <person name="Heumann K."/>
            <person name="Kleine K."/>
            <person name="Mewes H.-W."/>
            <person name="Zollner A."/>
            <person name="Zaccaria P."/>
        </authorList>
    </citation>
    <scope>NUCLEOTIDE SEQUENCE [LARGE SCALE GENOMIC DNA]</scope>
    <source>
        <strain>ATCC 204508 / S288c</strain>
    </source>
</reference>
<reference key="2">
    <citation type="journal article" date="2014" name="G3 (Bethesda)">
        <title>The reference genome sequence of Saccharomyces cerevisiae: Then and now.</title>
        <authorList>
            <person name="Engel S.R."/>
            <person name="Dietrich F.S."/>
            <person name="Fisk D.G."/>
            <person name="Binkley G."/>
            <person name="Balakrishnan R."/>
            <person name="Costanzo M.C."/>
            <person name="Dwight S.S."/>
            <person name="Hitz B.C."/>
            <person name="Karra K."/>
            <person name="Nash R.S."/>
            <person name="Weng S."/>
            <person name="Wong E.D."/>
            <person name="Lloyd P."/>
            <person name="Skrzypek M.S."/>
            <person name="Miyasato S.R."/>
            <person name="Simison M."/>
            <person name="Cherry J.M."/>
        </authorList>
    </citation>
    <scope>GENOME REANNOTATION</scope>
    <source>
        <strain>ATCC 204508 / S288c</strain>
    </source>
</reference>
<reference key="3">
    <citation type="journal article" date="1993" name="Yeast">
        <title>Isolation and DNA sequence of the STE14 gene encoding farnesyl cysteine: carboxyl methyltransferase.</title>
        <authorList>
            <person name="Ashby M.N."/>
            <person name="Errada P.R."/>
            <person name="Boyartchuk V.L."/>
            <person name="Rine J."/>
        </authorList>
    </citation>
    <scope>NUCLEOTIDE SEQUENCE OF 233-341</scope>
    <source>
        <strain>JRY3205</strain>
    </source>
</reference>
<reference key="4">
    <citation type="journal article" date="2000" name="Cell">
        <title>Functional and genomic analyses reveal an essential coordination between the unfolded protein response and ER-associated degradation.</title>
        <authorList>
            <person name="Travers K.J."/>
            <person name="Patil C.K."/>
            <person name="Wodicka L."/>
            <person name="Lockhart D.J."/>
            <person name="Weissman J.S."/>
            <person name="Walter P."/>
        </authorList>
    </citation>
    <scope>INDUCTION</scope>
</reference>
<reference key="5">
    <citation type="journal article" date="2004" name="FEMS Yeast Res.">
        <title>Der1p, a protein required for degradation of malfolded soluble proteins of the endoplasmic reticulum: topology and Der1-like proteins.</title>
        <authorList>
            <person name="Hitt R."/>
            <person name="Wolf D.H."/>
        </authorList>
    </citation>
    <scope>FUNCTION</scope>
    <scope>SUBCELLULAR LOCATION</scope>
    <scope>MEMBRANE TOPOLOGY</scope>
</reference>
<reference key="6">
    <citation type="journal article" date="2003" name="Nature">
        <title>Global analysis of protein localization in budding yeast.</title>
        <authorList>
            <person name="Huh W.-K."/>
            <person name="Falvo J.V."/>
            <person name="Gerke L.C."/>
            <person name="Carroll A.S."/>
            <person name="Howson R.W."/>
            <person name="Weissman J.S."/>
            <person name="O'Shea E.K."/>
        </authorList>
    </citation>
    <scope>SUBCELLULAR LOCATION [LARGE SCALE ANALYSIS]</scope>
</reference>
<reference key="7">
    <citation type="journal article" date="2006" name="Proc. Natl. Acad. Sci. U.S.A.">
        <title>A global topology map of the Saccharomyces cerevisiae membrane proteome.</title>
        <authorList>
            <person name="Kim H."/>
            <person name="Melen K."/>
            <person name="Oesterberg M."/>
            <person name="von Heijne G."/>
        </authorList>
    </citation>
    <scope>TOPOLOGY [LARGE SCALE ANALYSIS]</scope>
    <source>
        <strain>ATCC 208353 / W303-1A</strain>
    </source>
</reference>
<comment type="function">
    <text evidence="5">May be involved in the degradation process of some misfolded endoplasmic reticulum (ER) luminal proteins. Its precise role is however unclear and its inability to complement der1 mutations, suggests either that it is not involved in degradation process of misfolded proteins, or that it participates in the destruction of specific misfolded ER luminal proteins.</text>
</comment>
<comment type="interaction">
    <interactant intactId="EBI-33192">
        <id>Q12743</id>
    </interactant>
    <interactant intactId="EBI-17093">
        <id>P34223</id>
        <label>SHP1</label>
    </interactant>
    <organismsDiffer>false</organismsDiffer>
    <experiments>2</experiments>
</comment>
<comment type="interaction">
    <interactant intactId="EBI-33192">
        <id>Q12743</id>
    </interactant>
    <interactant intactId="EBI-21157">
        <id>P38349</id>
        <label>UBX7</label>
    </interactant>
    <organismsDiffer>false</organismsDiffer>
    <experiments>3</experiments>
</comment>
<comment type="subcellular location">
    <subcellularLocation>
        <location evidence="4 5">Endoplasmic reticulum membrane</location>
        <topology evidence="4 5">Multi-pass membrane protein</topology>
    </subcellularLocation>
</comment>
<comment type="induction">
    <text evidence="3">By endoplasmic reticulum stress.</text>
</comment>
<comment type="similarity">
    <text evidence="6">Belongs to the derlin family.</text>
</comment>
<name>DFM1_YEAST</name>
<organism>
    <name type="scientific">Saccharomyces cerevisiae (strain ATCC 204508 / S288c)</name>
    <name type="common">Baker's yeast</name>
    <dbReference type="NCBI Taxonomy" id="559292"/>
    <lineage>
        <taxon>Eukaryota</taxon>
        <taxon>Fungi</taxon>
        <taxon>Dikarya</taxon>
        <taxon>Ascomycota</taxon>
        <taxon>Saccharomycotina</taxon>
        <taxon>Saccharomycetes</taxon>
        <taxon>Saccharomycetales</taxon>
        <taxon>Saccharomycetaceae</taxon>
        <taxon>Saccharomyces</taxon>
    </lineage>
</organism>
<proteinExistence type="evidence at protein level"/>
<accession>Q12743</accession>
<accession>D6VT43</accession>
<accession>Q7LIJ5</accession>
<evidence type="ECO:0000255" key="1"/>
<evidence type="ECO:0000256" key="2">
    <source>
        <dbReference type="SAM" id="MobiDB-lite"/>
    </source>
</evidence>
<evidence type="ECO:0000269" key="3">
    <source>
    </source>
</evidence>
<evidence type="ECO:0000269" key="4">
    <source>
    </source>
</evidence>
<evidence type="ECO:0000269" key="5">
    <source>
    </source>
</evidence>
<evidence type="ECO:0000305" key="6"/>
<protein>
    <recommendedName>
        <fullName>DER1-like family member protein 1</fullName>
    </recommendedName>
</protein>
<sequence>MAGPRNVRTLHGNGGRNNDVMGPKEFWLNIPPITRTLFTLAIVMTIVGRLNLINPWYFIYVWNLTFKKVQIWRLLTSCVMLSSRAMPALMELYSIYDRSSQLERGHFGPGLSNRRGPMVTVDYAYYLCFCILAITTATTIIYGSYYPVVLTSGFISCITYTWSIDNANVQIMFYGLIPVWGKYFPLIQLFISFVFNEGDFVISLIGFTTGYLYTCLDTHTLGPIWGMISRKADPTYGISPNGKFSTPWWFTSLYARITGAHNETATFNNNFANVPSSQRETRTFSGRGQRLGTAPATLSQTSGTDSGRASGSQLRSGPSNLNQFQGRGQRVGQTNSPSDSQ</sequence>
<dbReference type="EMBL" id="U33007">
    <property type="protein sequence ID" value="AAB64889.1"/>
    <property type="molecule type" value="Genomic_DNA"/>
</dbReference>
<dbReference type="EMBL" id="L07952">
    <property type="protein sequence ID" value="AAA16518.1"/>
    <property type="molecule type" value="Unassigned_DNA"/>
</dbReference>
<dbReference type="EMBL" id="BK006938">
    <property type="protein sequence ID" value="DAA12253.1"/>
    <property type="molecule type" value="Genomic_DNA"/>
</dbReference>
<dbReference type="PIR" id="S69696">
    <property type="entry name" value="S69696"/>
</dbReference>
<dbReference type="RefSeq" id="NP_010699.1">
    <property type="nucleotide sequence ID" value="NM_001180719.1"/>
</dbReference>
<dbReference type="BioGRID" id="32471">
    <property type="interactions" value="97"/>
</dbReference>
<dbReference type="FunCoup" id="Q12743">
    <property type="interactions" value="580"/>
</dbReference>
<dbReference type="IntAct" id="Q12743">
    <property type="interactions" value="19"/>
</dbReference>
<dbReference type="MINT" id="Q12743"/>
<dbReference type="STRING" id="4932.YDR411C"/>
<dbReference type="TCDB" id="3.A.16.1.2">
    <property type="family name" value="the endoplasmic reticular retrotranslocon (er-rt) family"/>
</dbReference>
<dbReference type="GlyGen" id="Q12743">
    <property type="glycosylation" value="1 site, 1 O-linked glycan (1 site)"/>
</dbReference>
<dbReference type="iPTMnet" id="Q12743"/>
<dbReference type="PaxDb" id="4932-YDR411C"/>
<dbReference type="PeptideAtlas" id="Q12743"/>
<dbReference type="EnsemblFungi" id="YDR411C_mRNA">
    <property type="protein sequence ID" value="YDR411C"/>
    <property type="gene ID" value="YDR411C"/>
</dbReference>
<dbReference type="GeneID" id="852020"/>
<dbReference type="KEGG" id="sce:YDR411C"/>
<dbReference type="AGR" id="SGD:S000002819"/>
<dbReference type="SGD" id="S000002819">
    <property type="gene designation" value="DFM1"/>
</dbReference>
<dbReference type="VEuPathDB" id="FungiDB:YDR411C"/>
<dbReference type="eggNOG" id="KOG0858">
    <property type="taxonomic scope" value="Eukaryota"/>
</dbReference>
<dbReference type="GeneTree" id="ENSGT00530000063156"/>
<dbReference type="HOGENOM" id="CLU_059047_0_0_1"/>
<dbReference type="InParanoid" id="Q12743"/>
<dbReference type="OMA" id="TYGVACF"/>
<dbReference type="OrthoDB" id="19102at2759"/>
<dbReference type="BioCyc" id="YEAST:G3O-29954-MONOMER"/>
<dbReference type="BioGRID-ORCS" id="852020">
    <property type="hits" value="0 hits in 10 CRISPR screens"/>
</dbReference>
<dbReference type="PRO" id="PR:Q12743"/>
<dbReference type="Proteomes" id="UP000002311">
    <property type="component" value="Chromosome IV"/>
</dbReference>
<dbReference type="RNAct" id="Q12743">
    <property type="molecule type" value="protein"/>
</dbReference>
<dbReference type="GO" id="GO:0005783">
    <property type="term" value="C:endoplasmic reticulum"/>
    <property type="evidence" value="ECO:0000314"/>
    <property type="project" value="SGD"/>
</dbReference>
<dbReference type="GO" id="GO:0005789">
    <property type="term" value="C:endoplasmic reticulum membrane"/>
    <property type="evidence" value="ECO:0000318"/>
    <property type="project" value="GO_Central"/>
</dbReference>
<dbReference type="GO" id="GO:0044183">
    <property type="term" value="F:protein folding chaperone"/>
    <property type="evidence" value="ECO:0000314"/>
    <property type="project" value="SGD"/>
</dbReference>
<dbReference type="GO" id="GO:0005047">
    <property type="term" value="F:signal recognition particle binding"/>
    <property type="evidence" value="ECO:0000318"/>
    <property type="project" value="GO_Central"/>
</dbReference>
<dbReference type="GO" id="GO:0030968">
    <property type="term" value="P:endoplasmic reticulum unfolded protein response"/>
    <property type="evidence" value="ECO:0000315"/>
    <property type="project" value="SGD"/>
</dbReference>
<dbReference type="GO" id="GO:0036503">
    <property type="term" value="P:ERAD pathway"/>
    <property type="evidence" value="ECO:0000315"/>
    <property type="project" value="SGD"/>
</dbReference>
<dbReference type="GO" id="GO:1904152">
    <property type="term" value="P:regulation of retrograde protein transport, ER to cytosol"/>
    <property type="evidence" value="ECO:0000315"/>
    <property type="project" value="SGD"/>
</dbReference>
<dbReference type="InterPro" id="IPR007599">
    <property type="entry name" value="DER1"/>
</dbReference>
<dbReference type="InterPro" id="IPR035952">
    <property type="entry name" value="Rhomboid-like_sf"/>
</dbReference>
<dbReference type="PANTHER" id="PTHR11009">
    <property type="entry name" value="DER1-LIKE PROTEIN, DERLIN"/>
    <property type="match status" value="1"/>
</dbReference>
<dbReference type="Pfam" id="PF04511">
    <property type="entry name" value="DER1"/>
    <property type="match status" value="1"/>
</dbReference>
<dbReference type="SUPFAM" id="SSF144091">
    <property type="entry name" value="Rhomboid-like"/>
    <property type="match status" value="1"/>
</dbReference>